<evidence type="ECO:0000250" key="1">
    <source>
        <dbReference type="UniProtKB" id="A0A0G2K309"/>
    </source>
</evidence>
<evidence type="ECO:0000250" key="2">
    <source>
        <dbReference type="UniProtKB" id="Q12375"/>
    </source>
</evidence>
<evidence type="ECO:0000250" key="3">
    <source>
        <dbReference type="UniProtKB" id="Q9Y619"/>
    </source>
</evidence>
<evidence type="ECO:0000255" key="4"/>
<evidence type="ECO:0000255" key="5">
    <source>
        <dbReference type="PROSITE-ProRule" id="PRU00282"/>
    </source>
</evidence>
<evidence type="ECO:0000269" key="6">
    <source>
    </source>
</evidence>
<evidence type="ECO:0000303" key="7">
    <source>
    </source>
</evidence>
<evidence type="ECO:0000305" key="8"/>
<evidence type="ECO:0000312" key="9">
    <source>
        <dbReference type="MGI" id="MGI:1342274"/>
    </source>
</evidence>
<protein>
    <recommendedName>
        <fullName>Mitochondrial ornithine transporter 1</fullName>
    </recommendedName>
    <alternativeName>
        <fullName>Solute carrier family 25 member 15</fullName>
    </alternativeName>
</protein>
<proteinExistence type="evidence at protein level"/>
<comment type="function">
    <text evidence="1 3">Mitochondrial ornithine-citrulline antiporter. Catalyzes the exchange between cytosolic ornithine and mitochondrial citrulline plus an H(+), the proton compensates the positive charge of ornithine thus leading to an electroneutral transport. Plays a crucial role in the urea cycle, by connecting the cytosolic and the intramitochondrial reactions of the urea cycle. Lysine and arginine are also transported by the antiport mechanism (By similarity). In addition, catalyzes an electroneutral exchange of ornithine or lysine for H(+), a reaction driven by the pH gradient across the inner membrane (By similarity).</text>
</comment>
<comment type="catalytic activity">
    <reaction evidence="3">
        <text>L-citrulline(in) + L-ornithine(out) + H(+)(in) = L-citrulline(out) + L-ornithine(in) + H(+)(out)</text>
        <dbReference type="Rhea" id="RHEA:70787"/>
        <dbReference type="ChEBI" id="CHEBI:15378"/>
        <dbReference type="ChEBI" id="CHEBI:46911"/>
        <dbReference type="ChEBI" id="CHEBI:57743"/>
    </reaction>
</comment>
<comment type="catalytic activity">
    <reaction evidence="3">
        <text>L-ornithine(in) + L-arginine(out) = L-ornithine(out) + L-arginine(in)</text>
        <dbReference type="Rhea" id="RHEA:34991"/>
        <dbReference type="ChEBI" id="CHEBI:32682"/>
        <dbReference type="ChEBI" id="CHEBI:46911"/>
    </reaction>
</comment>
<comment type="catalytic activity">
    <reaction evidence="3">
        <text>L-ornithine(out) + L-lysine(in) = L-ornithine(in) + L-lysine(out)</text>
        <dbReference type="Rhea" id="RHEA:70799"/>
        <dbReference type="ChEBI" id="CHEBI:32551"/>
        <dbReference type="ChEBI" id="CHEBI:46911"/>
    </reaction>
</comment>
<comment type="catalytic activity">
    <reaction evidence="1">
        <text>L-lysine(out) + H(+)(in) = L-lysine(in) + H(+)(out)</text>
        <dbReference type="Rhea" id="RHEA:70795"/>
        <dbReference type="ChEBI" id="CHEBI:15378"/>
        <dbReference type="ChEBI" id="CHEBI:32551"/>
    </reaction>
</comment>
<comment type="catalytic activity">
    <reaction evidence="1">
        <text>L-ornithine(out) + H(+)(in) = L-ornithine(in) + H(+)(out)</text>
        <dbReference type="Rhea" id="RHEA:70791"/>
        <dbReference type="ChEBI" id="CHEBI:15378"/>
        <dbReference type="ChEBI" id="CHEBI:46911"/>
    </reaction>
</comment>
<comment type="activity regulation">
    <text evidence="3">Inhibited by pyridoxal 5'-phosphate as well as by mercurials (mersalyl, p-chloromercuribenzene sulfonate, and mercuric chloride), N-ethylmaleimide and spermine.</text>
</comment>
<comment type="subcellular location">
    <subcellularLocation>
        <location evidence="2">Mitochondrion inner membrane</location>
        <topology evidence="4">Multi-pass membrane protein</topology>
    </subcellularLocation>
    <subcellularLocation>
        <location evidence="1">Mitochondrion membrane</location>
        <topology evidence="4">Multi-pass membrane protein</topology>
    </subcellularLocation>
</comment>
<comment type="tissue specificity">
    <text evidence="6">Widely expressed, with highest levels in the liver, testis and kidney. In the brain, expressed at high levels in the hypothalamus.</text>
</comment>
<comment type="similarity">
    <text evidence="8">Belongs to the mitochondrial carrier (TC 2.A.29) family.</text>
</comment>
<keyword id="KW-0050">Antiport</keyword>
<keyword id="KW-0472">Membrane</keyword>
<keyword id="KW-0496">Mitochondrion</keyword>
<keyword id="KW-0999">Mitochondrion inner membrane</keyword>
<keyword id="KW-1185">Reference proteome</keyword>
<keyword id="KW-0677">Repeat</keyword>
<keyword id="KW-0812">Transmembrane</keyword>
<keyword id="KW-1133">Transmembrane helix</keyword>
<keyword id="KW-0813">Transport</keyword>
<name>ORNT1_MOUSE</name>
<reference key="1">
    <citation type="journal article" date="1999" name="Nat. Genet.">
        <title>Hyperornithinaemia-hyperammonaemia-homocitrullinuria syndrome is caused by mutations in a gene encoding a mitochondrial ornithine transporter.</title>
        <authorList>
            <person name="Camacho J.A."/>
            <person name="Obie C."/>
            <person name="Biery B."/>
            <person name="Goodman B.K."/>
            <person name="Hu A."/>
            <person name="Almashanu S."/>
            <person name="Steel G."/>
            <person name="Casey R."/>
            <person name="Lombard M."/>
            <person name="Mitchell G.A."/>
            <person name="Valle D."/>
        </authorList>
    </citation>
    <scope>NUCLEOTIDE SEQUENCE [MRNA]</scope>
</reference>
<reference key="2">
    <citation type="journal article" date="2009" name="Pediatr. Res.">
        <title>The human and mouse SLC25A29 mitochondrial transporters rescue the deficient ornithine metabolism in fibroblasts of patients with the hyperornithinemia-hyperammonemia-homocitrullinuria (HHH) syndrome.</title>
        <authorList>
            <person name="Camacho J.A."/>
            <person name="Rioseco-Camacho N."/>
        </authorList>
    </citation>
    <scope>TISSUE SPECIFICITY</scope>
</reference>
<reference key="3">
    <citation type="journal article" date="2010" name="Cell">
        <title>A tissue-specific atlas of mouse protein phosphorylation and expression.</title>
        <authorList>
            <person name="Huttlin E.L."/>
            <person name="Jedrychowski M.P."/>
            <person name="Elias J.E."/>
            <person name="Goswami T."/>
            <person name="Rad R."/>
            <person name="Beausoleil S.A."/>
            <person name="Villen J."/>
            <person name="Haas W."/>
            <person name="Sowa M.E."/>
            <person name="Gygi S.P."/>
        </authorList>
    </citation>
    <scope>IDENTIFICATION BY MASS SPECTROMETRY [LARGE SCALE ANALYSIS]</scope>
    <source>
        <tissue>Kidney</tissue>
        <tissue>Liver</tissue>
    </source>
</reference>
<reference key="4">
    <citation type="journal article" date="2013" name="Mol. Cell">
        <title>SIRT5-mediated lysine desuccinylation impacts diverse metabolic pathways.</title>
        <authorList>
            <person name="Park J."/>
            <person name="Chen Y."/>
            <person name="Tishkoff D.X."/>
            <person name="Peng C."/>
            <person name="Tan M."/>
            <person name="Dai L."/>
            <person name="Xie Z."/>
            <person name="Zhang Y."/>
            <person name="Zwaans B.M."/>
            <person name="Skinner M.E."/>
            <person name="Lombard D.B."/>
            <person name="Zhao Y."/>
        </authorList>
    </citation>
    <scope>IDENTIFICATION BY MASS SPECTROMETRY [LARGE SCALE ANALYSIS]</scope>
    <source>
        <tissue>Liver</tissue>
    </source>
</reference>
<gene>
    <name evidence="9" type="primary">Slc25a15</name>
    <name evidence="7" type="synonym">Ornt1</name>
</gene>
<organism>
    <name type="scientific">Mus musculus</name>
    <name type="common">Mouse</name>
    <dbReference type="NCBI Taxonomy" id="10090"/>
    <lineage>
        <taxon>Eukaryota</taxon>
        <taxon>Metazoa</taxon>
        <taxon>Chordata</taxon>
        <taxon>Craniata</taxon>
        <taxon>Vertebrata</taxon>
        <taxon>Euteleostomi</taxon>
        <taxon>Mammalia</taxon>
        <taxon>Eutheria</taxon>
        <taxon>Euarchontoglires</taxon>
        <taxon>Glires</taxon>
        <taxon>Rodentia</taxon>
        <taxon>Myomorpha</taxon>
        <taxon>Muroidea</taxon>
        <taxon>Muridae</taxon>
        <taxon>Murinae</taxon>
        <taxon>Mus</taxon>
        <taxon>Mus</taxon>
    </lineage>
</organism>
<dbReference type="EMBL" id="AF133914">
    <property type="protein sequence ID" value="AAD45252.1"/>
    <property type="molecule type" value="mRNA"/>
</dbReference>
<dbReference type="CCDS" id="CCDS22175.1"/>
<dbReference type="RefSeq" id="NP_001345900.1">
    <property type="nucleotide sequence ID" value="NM_001358971.1"/>
</dbReference>
<dbReference type="RefSeq" id="NP_851842.1">
    <property type="nucleotide sequence ID" value="NM_181325.4"/>
</dbReference>
<dbReference type="RefSeq" id="XP_006509089.1">
    <property type="nucleotide sequence ID" value="XM_006509026.3"/>
</dbReference>
<dbReference type="SMR" id="Q9WVD5"/>
<dbReference type="BioGRID" id="201981">
    <property type="interactions" value="2"/>
</dbReference>
<dbReference type="FunCoup" id="Q9WVD5">
    <property type="interactions" value="1011"/>
</dbReference>
<dbReference type="STRING" id="10090.ENSMUSP00000033871"/>
<dbReference type="GlyGen" id="Q9WVD5">
    <property type="glycosylation" value="1 site, 1 O-linked glycan (1 site)"/>
</dbReference>
<dbReference type="iPTMnet" id="Q9WVD5"/>
<dbReference type="PhosphoSitePlus" id="Q9WVD5"/>
<dbReference type="SwissPalm" id="Q9WVD5"/>
<dbReference type="jPOST" id="Q9WVD5"/>
<dbReference type="PaxDb" id="10090-ENSMUSP00000033871"/>
<dbReference type="ProteomicsDB" id="287745"/>
<dbReference type="Pumba" id="Q9WVD5"/>
<dbReference type="Antibodypedia" id="42171">
    <property type="antibodies" value="79 antibodies from 19 providers"/>
</dbReference>
<dbReference type="DNASU" id="18408"/>
<dbReference type="Ensembl" id="ENSMUST00000033871.8">
    <property type="protein sequence ID" value="ENSMUSP00000033871.7"/>
    <property type="gene ID" value="ENSMUSG00000031482.10"/>
</dbReference>
<dbReference type="GeneID" id="18408"/>
<dbReference type="KEGG" id="mmu:18408"/>
<dbReference type="UCSC" id="uc009lcz.2">
    <property type="organism name" value="mouse"/>
</dbReference>
<dbReference type="AGR" id="MGI:1342274"/>
<dbReference type="CTD" id="10166"/>
<dbReference type="MGI" id="MGI:1342274">
    <property type="gene designation" value="Slc25a15"/>
</dbReference>
<dbReference type="VEuPathDB" id="HostDB:ENSMUSG00000031482"/>
<dbReference type="eggNOG" id="KOG0763">
    <property type="taxonomic scope" value="Eukaryota"/>
</dbReference>
<dbReference type="GeneTree" id="ENSGT00730000110966"/>
<dbReference type="HOGENOM" id="CLU_015166_16_3_1"/>
<dbReference type="InParanoid" id="Q9WVD5"/>
<dbReference type="OMA" id="PIDCFRQ"/>
<dbReference type="OrthoDB" id="409586at2759"/>
<dbReference type="PhylomeDB" id="Q9WVD5"/>
<dbReference type="TreeFam" id="TF314880"/>
<dbReference type="Reactome" id="R-MMU-70635">
    <property type="pathway name" value="Urea cycle"/>
</dbReference>
<dbReference type="BioGRID-ORCS" id="18408">
    <property type="hits" value="6 hits in 83 CRISPR screens"/>
</dbReference>
<dbReference type="ChiTaRS" id="Slc25a15">
    <property type="organism name" value="mouse"/>
</dbReference>
<dbReference type="PRO" id="PR:Q9WVD5"/>
<dbReference type="Proteomes" id="UP000000589">
    <property type="component" value="Chromosome 8"/>
</dbReference>
<dbReference type="RNAct" id="Q9WVD5">
    <property type="molecule type" value="protein"/>
</dbReference>
<dbReference type="Bgee" id="ENSMUSG00000031482">
    <property type="expression patterns" value="Expressed in epithelium of small intestine and 247 other cell types or tissues"/>
</dbReference>
<dbReference type="ExpressionAtlas" id="Q9WVD5">
    <property type="expression patterns" value="baseline and differential"/>
</dbReference>
<dbReference type="GO" id="GO:0005743">
    <property type="term" value="C:mitochondrial inner membrane"/>
    <property type="evidence" value="ECO:0007005"/>
    <property type="project" value="MGI"/>
</dbReference>
<dbReference type="GO" id="GO:0005739">
    <property type="term" value="C:mitochondrion"/>
    <property type="evidence" value="ECO:0007005"/>
    <property type="project" value="MGI"/>
</dbReference>
<dbReference type="GO" id="GO:0015297">
    <property type="term" value="F:antiporter activity"/>
    <property type="evidence" value="ECO:0000250"/>
    <property type="project" value="UniProtKB"/>
</dbReference>
<dbReference type="GO" id="GO:0061459">
    <property type="term" value="F:L-arginine transmembrane transporter activity"/>
    <property type="evidence" value="ECO:0000250"/>
    <property type="project" value="UniProtKB"/>
</dbReference>
<dbReference type="GO" id="GO:0015189">
    <property type="term" value="F:L-lysine transmembrane transporter activity"/>
    <property type="evidence" value="ECO:0000250"/>
    <property type="project" value="UniProtKB"/>
</dbReference>
<dbReference type="GO" id="GO:1903826">
    <property type="term" value="P:L-arginine transmembrane transport"/>
    <property type="evidence" value="ECO:0000250"/>
    <property type="project" value="UniProtKB"/>
</dbReference>
<dbReference type="GO" id="GO:1903401">
    <property type="term" value="P:L-lysine transmembrane transport"/>
    <property type="evidence" value="ECO:0000250"/>
    <property type="project" value="UniProtKB"/>
</dbReference>
<dbReference type="FunFam" id="1.50.40.10:FF:000055">
    <property type="entry name" value="mitochondrial ornithine transporter 1 isoform X1"/>
    <property type="match status" value="1"/>
</dbReference>
<dbReference type="Gene3D" id="1.50.40.10">
    <property type="entry name" value="Mitochondrial carrier domain"/>
    <property type="match status" value="1"/>
</dbReference>
<dbReference type="InterPro" id="IPR050567">
    <property type="entry name" value="Mitochondrial_Carrier"/>
</dbReference>
<dbReference type="InterPro" id="IPR018108">
    <property type="entry name" value="Mitochondrial_sb/sol_carrier"/>
</dbReference>
<dbReference type="InterPro" id="IPR023395">
    <property type="entry name" value="Mt_carrier_dom_sf"/>
</dbReference>
<dbReference type="PANTHER" id="PTHR45624">
    <property type="entry name" value="MITOCHONDRIAL BASIC AMINO ACIDS TRANSPORTER-RELATED"/>
    <property type="match status" value="1"/>
</dbReference>
<dbReference type="PANTHER" id="PTHR45624:SF22">
    <property type="entry name" value="MITOCHONDRIAL ORNITHINE TRANSPORTER 1"/>
    <property type="match status" value="1"/>
</dbReference>
<dbReference type="Pfam" id="PF00153">
    <property type="entry name" value="Mito_carr"/>
    <property type="match status" value="3"/>
</dbReference>
<dbReference type="SUPFAM" id="SSF103506">
    <property type="entry name" value="Mitochondrial carrier"/>
    <property type="match status" value="1"/>
</dbReference>
<dbReference type="PROSITE" id="PS50920">
    <property type="entry name" value="SOLCAR"/>
    <property type="match status" value="3"/>
</dbReference>
<feature type="chain" id="PRO_0000090651" description="Mitochondrial ornithine transporter 1">
    <location>
        <begin position="1"/>
        <end position="301"/>
    </location>
</feature>
<feature type="transmembrane region" description="Helical; Name=1" evidence="4">
    <location>
        <begin position="5"/>
        <end position="25"/>
    </location>
</feature>
<feature type="transmembrane region" description="Helical; Name=2" evidence="4">
    <location>
        <begin position="68"/>
        <end position="88"/>
    </location>
</feature>
<feature type="transmembrane region" description="Helical; Name=3" evidence="4">
    <location>
        <begin position="110"/>
        <end position="130"/>
    </location>
</feature>
<feature type="transmembrane region" description="Helical; Name=4" evidence="4">
    <location>
        <begin position="168"/>
        <end position="188"/>
    </location>
</feature>
<feature type="transmembrane region" description="Helical; Name=5" evidence="4">
    <location>
        <begin position="207"/>
        <end position="227"/>
    </location>
</feature>
<feature type="transmembrane region" description="Helical; Name=6" evidence="4">
    <location>
        <begin position="237"/>
        <end position="257"/>
    </location>
</feature>
<feature type="repeat" description="Solcar 1" evidence="5">
    <location>
        <begin position="7"/>
        <end position="91"/>
    </location>
</feature>
<feature type="repeat" description="Solcar 2" evidence="5">
    <location>
        <begin position="104"/>
        <end position="197"/>
    </location>
</feature>
<feature type="repeat" description="Solcar 3" evidence="5">
    <location>
        <begin position="207"/>
        <end position="293"/>
    </location>
</feature>
<accession>Q9WVD5</accession>
<sequence length="301" mass="32823">MKSNPAIQAAIDLTAGAAGGTACVLTGQPFDTMKVKMQTFPDLYRGLTDCCLKTYSQVGFRGFYKGTSPALIANIAENSVLFMCYGFCQQVVRKVVGLDQQAKLSDLQNAAAGSFASAFAALVLCPTELVKCRLQTMYEMETSGKIAASQNTVWSVVKEIFRKDGPLGFYHGLSSTLLREVPGYFFFFGGYELSRSFFASGRSKDELGPVPLMLSGGFGGICLWLAVYPVDCIKSRIQVLSMTGKQTGLVRTFLSIVKNEGITALYSGLKPTMIRAFPANGALFLAYEYSRKLMMNQLEAW</sequence>